<comment type="function">
    <text evidence="1">Catalyzes the irreversible NADPH-dependent deamination of GMP to IMP. It functions in the conversion of nucleobase, nucleoside and nucleotide derivatives of G to A nucleotides, and in maintaining the intracellular balance of A and G nucleotides.</text>
</comment>
<comment type="catalytic activity">
    <reaction evidence="1">
        <text>IMP + NH4(+) + NADP(+) = GMP + NADPH + 2 H(+)</text>
        <dbReference type="Rhea" id="RHEA:17185"/>
        <dbReference type="ChEBI" id="CHEBI:15378"/>
        <dbReference type="ChEBI" id="CHEBI:28938"/>
        <dbReference type="ChEBI" id="CHEBI:57783"/>
        <dbReference type="ChEBI" id="CHEBI:58053"/>
        <dbReference type="ChEBI" id="CHEBI:58115"/>
        <dbReference type="ChEBI" id="CHEBI:58349"/>
        <dbReference type="EC" id="1.7.1.7"/>
    </reaction>
</comment>
<comment type="subunit">
    <text evidence="1">Homotetramer.</text>
</comment>
<comment type="similarity">
    <text evidence="1">Belongs to the IMPDH/GMPR family. GuaC type 1 subfamily.</text>
</comment>
<evidence type="ECO:0000255" key="1">
    <source>
        <dbReference type="HAMAP-Rule" id="MF_00596"/>
    </source>
</evidence>
<proteinExistence type="inferred from homology"/>
<name>GUAC_SHISS</name>
<dbReference type="EC" id="1.7.1.7" evidence="1"/>
<dbReference type="EMBL" id="CP000038">
    <property type="protein sequence ID" value="AAZ86907.1"/>
    <property type="molecule type" value="Genomic_DNA"/>
</dbReference>
<dbReference type="RefSeq" id="WP_001217338.1">
    <property type="nucleotide sequence ID" value="NC_007384.1"/>
</dbReference>
<dbReference type="SMR" id="Q3Z5Q5"/>
<dbReference type="GeneID" id="93777331"/>
<dbReference type="KEGG" id="ssn:SSON_0112"/>
<dbReference type="HOGENOM" id="CLU_022552_5_3_6"/>
<dbReference type="Proteomes" id="UP000002529">
    <property type="component" value="Chromosome"/>
</dbReference>
<dbReference type="GO" id="GO:0005829">
    <property type="term" value="C:cytosol"/>
    <property type="evidence" value="ECO:0007669"/>
    <property type="project" value="TreeGrafter"/>
</dbReference>
<dbReference type="GO" id="GO:1902560">
    <property type="term" value="C:GMP reductase complex"/>
    <property type="evidence" value="ECO:0007669"/>
    <property type="project" value="InterPro"/>
</dbReference>
<dbReference type="GO" id="GO:0003920">
    <property type="term" value="F:GMP reductase activity"/>
    <property type="evidence" value="ECO:0007669"/>
    <property type="project" value="UniProtKB-UniRule"/>
</dbReference>
<dbReference type="GO" id="GO:0046872">
    <property type="term" value="F:metal ion binding"/>
    <property type="evidence" value="ECO:0007669"/>
    <property type="project" value="UniProtKB-KW"/>
</dbReference>
<dbReference type="GO" id="GO:0006163">
    <property type="term" value="P:purine nucleotide metabolic process"/>
    <property type="evidence" value="ECO:0007669"/>
    <property type="project" value="UniProtKB-UniRule"/>
</dbReference>
<dbReference type="CDD" id="cd00381">
    <property type="entry name" value="IMPDH"/>
    <property type="match status" value="1"/>
</dbReference>
<dbReference type="FunFam" id="3.20.20.70:FF:000012">
    <property type="entry name" value="GMP reductase"/>
    <property type="match status" value="1"/>
</dbReference>
<dbReference type="Gene3D" id="3.20.20.70">
    <property type="entry name" value="Aldolase class I"/>
    <property type="match status" value="1"/>
</dbReference>
<dbReference type="HAMAP" id="MF_00596">
    <property type="entry name" value="GMP_reduct_type1"/>
    <property type="match status" value="1"/>
</dbReference>
<dbReference type="InterPro" id="IPR013785">
    <property type="entry name" value="Aldolase_TIM"/>
</dbReference>
<dbReference type="InterPro" id="IPR050139">
    <property type="entry name" value="GMP_reductase"/>
</dbReference>
<dbReference type="InterPro" id="IPR005993">
    <property type="entry name" value="GMPR"/>
</dbReference>
<dbReference type="InterPro" id="IPR015875">
    <property type="entry name" value="IMP_DH/GMP_Rdtase_CS"/>
</dbReference>
<dbReference type="InterPro" id="IPR001093">
    <property type="entry name" value="IMP_DH_GMPRt"/>
</dbReference>
<dbReference type="NCBIfam" id="TIGR01305">
    <property type="entry name" value="GMP_reduct_1"/>
    <property type="match status" value="1"/>
</dbReference>
<dbReference type="NCBIfam" id="NF003470">
    <property type="entry name" value="PRK05096.1"/>
    <property type="match status" value="1"/>
</dbReference>
<dbReference type="PANTHER" id="PTHR43170">
    <property type="entry name" value="GMP REDUCTASE"/>
    <property type="match status" value="1"/>
</dbReference>
<dbReference type="PANTHER" id="PTHR43170:SF5">
    <property type="entry name" value="GMP REDUCTASE"/>
    <property type="match status" value="1"/>
</dbReference>
<dbReference type="Pfam" id="PF00478">
    <property type="entry name" value="IMPDH"/>
    <property type="match status" value="1"/>
</dbReference>
<dbReference type="PIRSF" id="PIRSF000235">
    <property type="entry name" value="GMP_reductase"/>
    <property type="match status" value="1"/>
</dbReference>
<dbReference type="SMART" id="SM01240">
    <property type="entry name" value="IMPDH"/>
    <property type="match status" value="1"/>
</dbReference>
<dbReference type="SUPFAM" id="SSF51412">
    <property type="entry name" value="Inosine monophosphate dehydrogenase (IMPDH)"/>
    <property type="match status" value="1"/>
</dbReference>
<dbReference type="PROSITE" id="PS00487">
    <property type="entry name" value="IMP_DH_GMP_RED"/>
    <property type="match status" value="1"/>
</dbReference>
<organism>
    <name type="scientific">Shigella sonnei (strain Ss046)</name>
    <dbReference type="NCBI Taxonomy" id="300269"/>
    <lineage>
        <taxon>Bacteria</taxon>
        <taxon>Pseudomonadati</taxon>
        <taxon>Pseudomonadota</taxon>
        <taxon>Gammaproteobacteria</taxon>
        <taxon>Enterobacterales</taxon>
        <taxon>Enterobacteriaceae</taxon>
        <taxon>Shigella</taxon>
    </lineage>
</organism>
<sequence length="347" mass="37384">MRIEEDLKLGFKDVLIRPKRSTLKSRSDVELERQFTFKHSGQSWSGVPIIAANMDTVGTFSMASALASFDILTAVHKHYSVEEWQAFINNSSADVLKHVMVSTGTSDADFEKTKQILDLNPALNFVCIDVANGYSEHFVQFVAKAREAWPTKTICAGNVVTGEMCEELILSGADIVKVGIGPGSVCTTRVKTGVGYPQLSAVIECADAAHGLGGMIVSDGGCTTPGDVAKAFGGGADFVMLGGMLAGHEESGGRIVEENGEKFMLFYGMSSESAMKRHVGGVAEYRAAEGKTVKLPLRGPVENTARDILGGLRSACTYVGASRLKELTKRTTFIRVQEQENRIFNNL</sequence>
<gene>
    <name evidence="1" type="primary">guaC</name>
    <name type="ordered locus">SSON_0112</name>
</gene>
<reference key="1">
    <citation type="journal article" date="2005" name="Nucleic Acids Res.">
        <title>Genome dynamics and diversity of Shigella species, the etiologic agents of bacillary dysentery.</title>
        <authorList>
            <person name="Yang F."/>
            <person name="Yang J."/>
            <person name="Zhang X."/>
            <person name="Chen L."/>
            <person name="Jiang Y."/>
            <person name="Yan Y."/>
            <person name="Tang X."/>
            <person name="Wang J."/>
            <person name="Xiong Z."/>
            <person name="Dong J."/>
            <person name="Xue Y."/>
            <person name="Zhu Y."/>
            <person name="Xu X."/>
            <person name="Sun L."/>
            <person name="Chen S."/>
            <person name="Nie H."/>
            <person name="Peng J."/>
            <person name="Xu J."/>
            <person name="Wang Y."/>
            <person name="Yuan Z."/>
            <person name="Wen Y."/>
            <person name="Yao Z."/>
            <person name="Shen Y."/>
            <person name="Qiang B."/>
            <person name="Hou Y."/>
            <person name="Yu J."/>
            <person name="Jin Q."/>
        </authorList>
    </citation>
    <scope>NUCLEOTIDE SEQUENCE [LARGE SCALE GENOMIC DNA]</scope>
    <source>
        <strain>Ss046</strain>
    </source>
</reference>
<feature type="chain" id="PRO_1000025621" description="GMP reductase">
    <location>
        <begin position="1"/>
        <end position="347"/>
    </location>
</feature>
<feature type="active site" description="Thioimidate intermediate" evidence="1">
    <location>
        <position position="186"/>
    </location>
</feature>
<feature type="binding site" evidence="1">
    <location>
        <begin position="108"/>
        <end position="131"/>
    </location>
    <ligand>
        <name>NADP(+)</name>
        <dbReference type="ChEBI" id="CHEBI:58349"/>
    </ligand>
</feature>
<feature type="binding site" evidence="1">
    <location>
        <position position="181"/>
    </location>
    <ligand>
        <name>K(+)</name>
        <dbReference type="ChEBI" id="CHEBI:29103"/>
    </ligand>
</feature>
<feature type="binding site" evidence="1">
    <location>
        <position position="183"/>
    </location>
    <ligand>
        <name>K(+)</name>
        <dbReference type="ChEBI" id="CHEBI:29103"/>
    </ligand>
</feature>
<feature type="binding site" evidence="1">
    <location>
        <begin position="216"/>
        <end position="239"/>
    </location>
    <ligand>
        <name>NADP(+)</name>
        <dbReference type="ChEBI" id="CHEBI:58349"/>
    </ligand>
</feature>
<protein>
    <recommendedName>
        <fullName evidence="1">GMP reductase</fullName>
        <ecNumber evidence="1">1.7.1.7</ecNumber>
    </recommendedName>
    <alternativeName>
        <fullName evidence="1">Guanosine 5'-monophosphate oxidoreductase</fullName>
        <shortName evidence="1">Guanosine monophosphate reductase</shortName>
    </alternativeName>
</protein>
<accession>Q3Z5Q5</accession>
<keyword id="KW-0479">Metal-binding</keyword>
<keyword id="KW-0521">NADP</keyword>
<keyword id="KW-0560">Oxidoreductase</keyword>
<keyword id="KW-0630">Potassium</keyword>
<keyword id="KW-1185">Reference proteome</keyword>